<evidence type="ECO:0000255" key="1">
    <source>
        <dbReference type="HAMAP-Rule" id="MF_00658"/>
    </source>
</evidence>
<accession>A7IH12</accession>
<organism>
    <name type="scientific">Xanthobacter autotrophicus (strain ATCC BAA-1158 / Py2)</name>
    <dbReference type="NCBI Taxonomy" id="78245"/>
    <lineage>
        <taxon>Bacteria</taxon>
        <taxon>Pseudomonadati</taxon>
        <taxon>Pseudomonadota</taxon>
        <taxon>Alphaproteobacteria</taxon>
        <taxon>Hyphomicrobiales</taxon>
        <taxon>Xanthobacteraceae</taxon>
        <taxon>Xanthobacter</taxon>
    </lineage>
</organism>
<keyword id="KW-0963">Cytoplasm</keyword>
<keyword id="KW-0489">Methyltransferase</keyword>
<keyword id="KW-1185">Reference proteome</keyword>
<keyword id="KW-0698">rRNA processing</keyword>
<keyword id="KW-0949">S-adenosyl-L-methionine</keyword>
<keyword id="KW-0808">Transferase</keyword>
<sequence length="160" mass="16986">MRLVLACVGRLKAGAERDLVTRYVDRIRPAGRPLGLGPCDMIEIPESAARRAEDRMAEEGAALLAALPAGAGLIALDPRGRQLSSEDFATRMAAQRDGGLPALAFIIGGADGLADAVRDKAALMVAYGTATFPHQLVRVMLAEQIYRAVTILAGHPYHRA</sequence>
<dbReference type="EC" id="2.1.1.177" evidence="1"/>
<dbReference type="EMBL" id="CP000781">
    <property type="protein sequence ID" value="ABS67305.1"/>
    <property type="molecule type" value="Genomic_DNA"/>
</dbReference>
<dbReference type="SMR" id="A7IH12"/>
<dbReference type="STRING" id="78245.Xaut_2061"/>
<dbReference type="KEGG" id="xau:Xaut_2061"/>
<dbReference type="eggNOG" id="COG1576">
    <property type="taxonomic scope" value="Bacteria"/>
</dbReference>
<dbReference type="HOGENOM" id="CLU_100552_1_1_5"/>
<dbReference type="OrthoDB" id="9806643at2"/>
<dbReference type="PhylomeDB" id="A7IH12"/>
<dbReference type="Proteomes" id="UP000002417">
    <property type="component" value="Chromosome"/>
</dbReference>
<dbReference type="GO" id="GO:0005737">
    <property type="term" value="C:cytoplasm"/>
    <property type="evidence" value="ECO:0007669"/>
    <property type="project" value="UniProtKB-SubCell"/>
</dbReference>
<dbReference type="GO" id="GO:0070038">
    <property type="term" value="F:rRNA (pseudouridine-N3-)-methyltransferase activity"/>
    <property type="evidence" value="ECO:0007669"/>
    <property type="project" value="UniProtKB-UniRule"/>
</dbReference>
<dbReference type="CDD" id="cd18081">
    <property type="entry name" value="RlmH-like"/>
    <property type="match status" value="1"/>
</dbReference>
<dbReference type="Gene3D" id="3.40.1280.10">
    <property type="match status" value="1"/>
</dbReference>
<dbReference type="HAMAP" id="MF_00658">
    <property type="entry name" value="23SrRNA_methyltr_H"/>
    <property type="match status" value="1"/>
</dbReference>
<dbReference type="InterPro" id="IPR029028">
    <property type="entry name" value="Alpha/beta_knot_MTases"/>
</dbReference>
<dbReference type="InterPro" id="IPR003742">
    <property type="entry name" value="RlmH-like"/>
</dbReference>
<dbReference type="InterPro" id="IPR029026">
    <property type="entry name" value="tRNA_m1G_MTases_N"/>
</dbReference>
<dbReference type="NCBIfam" id="NF000989">
    <property type="entry name" value="PRK00103.2-3"/>
    <property type="match status" value="1"/>
</dbReference>
<dbReference type="NCBIfam" id="NF000991">
    <property type="entry name" value="PRK00103.2-5"/>
    <property type="match status" value="1"/>
</dbReference>
<dbReference type="PANTHER" id="PTHR33603">
    <property type="entry name" value="METHYLTRANSFERASE"/>
    <property type="match status" value="1"/>
</dbReference>
<dbReference type="PANTHER" id="PTHR33603:SF1">
    <property type="entry name" value="RIBOSOMAL RNA LARGE SUBUNIT METHYLTRANSFERASE H"/>
    <property type="match status" value="1"/>
</dbReference>
<dbReference type="Pfam" id="PF02590">
    <property type="entry name" value="SPOUT_MTase"/>
    <property type="match status" value="1"/>
</dbReference>
<dbReference type="PIRSF" id="PIRSF004505">
    <property type="entry name" value="MT_bac"/>
    <property type="match status" value="1"/>
</dbReference>
<dbReference type="SUPFAM" id="SSF75217">
    <property type="entry name" value="alpha/beta knot"/>
    <property type="match status" value="1"/>
</dbReference>
<name>RLMH_XANP2</name>
<feature type="chain" id="PRO_0000366675" description="Ribosomal RNA large subunit methyltransferase H">
    <location>
        <begin position="1"/>
        <end position="160"/>
    </location>
</feature>
<feature type="binding site" evidence="1">
    <location>
        <position position="76"/>
    </location>
    <ligand>
        <name>S-adenosyl-L-methionine</name>
        <dbReference type="ChEBI" id="CHEBI:59789"/>
    </ligand>
</feature>
<feature type="binding site" evidence="1">
    <location>
        <position position="108"/>
    </location>
    <ligand>
        <name>S-adenosyl-L-methionine</name>
        <dbReference type="ChEBI" id="CHEBI:59789"/>
    </ligand>
</feature>
<comment type="function">
    <text evidence="1">Specifically methylates the pseudouridine at position 1915 (m3Psi1915) in 23S rRNA.</text>
</comment>
<comment type="catalytic activity">
    <reaction evidence="1">
        <text>pseudouridine(1915) in 23S rRNA + S-adenosyl-L-methionine = N(3)-methylpseudouridine(1915) in 23S rRNA + S-adenosyl-L-homocysteine + H(+)</text>
        <dbReference type="Rhea" id="RHEA:42752"/>
        <dbReference type="Rhea" id="RHEA-COMP:10221"/>
        <dbReference type="Rhea" id="RHEA-COMP:10222"/>
        <dbReference type="ChEBI" id="CHEBI:15378"/>
        <dbReference type="ChEBI" id="CHEBI:57856"/>
        <dbReference type="ChEBI" id="CHEBI:59789"/>
        <dbReference type="ChEBI" id="CHEBI:65314"/>
        <dbReference type="ChEBI" id="CHEBI:74486"/>
        <dbReference type="EC" id="2.1.1.177"/>
    </reaction>
</comment>
<comment type="subunit">
    <text evidence="1">Homodimer.</text>
</comment>
<comment type="subcellular location">
    <subcellularLocation>
        <location evidence="1">Cytoplasm</location>
    </subcellularLocation>
</comment>
<comment type="similarity">
    <text evidence="1">Belongs to the RNA methyltransferase RlmH family.</text>
</comment>
<protein>
    <recommendedName>
        <fullName evidence="1">Ribosomal RNA large subunit methyltransferase H</fullName>
        <ecNumber evidence="1">2.1.1.177</ecNumber>
    </recommendedName>
    <alternativeName>
        <fullName evidence="1">23S rRNA (pseudouridine1915-N3)-methyltransferase</fullName>
    </alternativeName>
    <alternativeName>
        <fullName evidence="1">23S rRNA m3Psi1915 methyltransferase</fullName>
    </alternativeName>
    <alternativeName>
        <fullName evidence="1">rRNA (pseudouridine-N3-)-methyltransferase RlmH</fullName>
    </alternativeName>
</protein>
<gene>
    <name evidence="1" type="primary">rlmH</name>
    <name type="ordered locus">Xaut_2061</name>
</gene>
<proteinExistence type="inferred from homology"/>
<reference key="1">
    <citation type="submission" date="2007-07" db="EMBL/GenBank/DDBJ databases">
        <title>Complete sequence of chromosome of Xanthobacter autotrophicus Py2.</title>
        <authorList>
            <consortium name="US DOE Joint Genome Institute"/>
            <person name="Copeland A."/>
            <person name="Lucas S."/>
            <person name="Lapidus A."/>
            <person name="Barry K."/>
            <person name="Glavina del Rio T."/>
            <person name="Hammon N."/>
            <person name="Israni S."/>
            <person name="Dalin E."/>
            <person name="Tice H."/>
            <person name="Pitluck S."/>
            <person name="Sims D."/>
            <person name="Brettin T."/>
            <person name="Bruce D."/>
            <person name="Detter J.C."/>
            <person name="Han C."/>
            <person name="Tapia R."/>
            <person name="Brainard J."/>
            <person name="Schmutz J."/>
            <person name="Larimer F."/>
            <person name="Land M."/>
            <person name="Hauser L."/>
            <person name="Kyrpides N."/>
            <person name="Kim E."/>
            <person name="Ensigns S.A."/>
            <person name="Richardson P."/>
        </authorList>
    </citation>
    <scope>NUCLEOTIDE SEQUENCE [LARGE SCALE GENOMIC DNA]</scope>
    <source>
        <strain>ATCC BAA-1158 / Py2</strain>
    </source>
</reference>